<proteinExistence type="inferred from homology"/>
<comment type="function">
    <text evidence="1">Involved in transcription antitermination. Required for transcription of ribosomal RNA (rRNA) genes. Binds specifically to the boxA antiterminator sequence of the ribosomal RNA (rrn) operons.</text>
</comment>
<comment type="similarity">
    <text evidence="1">Belongs to the NusB family.</text>
</comment>
<sequence length="131" mass="14633">MATRHQVRQSVVSLLYANEMGSEMEEFSNEFLEEKKIRNDQKSFTLTLYNGVLDNLNLIDEALDAHLGKWKLGEIGAVERAILRLGAYEIKFTNTQSAIVINEAILLANELGSDSSTRFINGVLDAISKVN</sequence>
<evidence type="ECO:0000255" key="1">
    <source>
        <dbReference type="HAMAP-Rule" id="MF_00073"/>
    </source>
</evidence>
<feature type="chain" id="PRO_1000023721" description="Transcription antitermination protein NusB">
    <location>
        <begin position="1"/>
        <end position="131"/>
    </location>
</feature>
<protein>
    <recommendedName>
        <fullName evidence="1">Transcription antitermination protein NusB</fullName>
    </recommendedName>
    <alternativeName>
        <fullName evidence="1">Antitermination factor NusB</fullName>
    </alternativeName>
</protein>
<name>NUSB_CAMFF</name>
<accession>A0RQJ6</accession>
<gene>
    <name evidence="1" type="primary">nusB</name>
    <name type="ordered locus">CFF8240_1333</name>
</gene>
<keyword id="KW-0694">RNA-binding</keyword>
<keyword id="KW-0804">Transcription</keyword>
<keyword id="KW-0889">Transcription antitermination</keyword>
<keyword id="KW-0805">Transcription regulation</keyword>
<organism>
    <name type="scientific">Campylobacter fetus subsp. fetus (strain 82-40)</name>
    <dbReference type="NCBI Taxonomy" id="360106"/>
    <lineage>
        <taxon>Bacteria</taxon>
        <taxon>Pseudomonadati</taxon>
        <taxon>Campylobacterota</taxon>
        <taxon>Epsilonproteobacteria</taxon>
        <taxon>Campylobacterales</taxon>
        <taxon>Campylobacteraceae</taxon>
        <taxon>Campylobacter</taxon>
    </lineage>
</organism>
<dbReference type="EMBL" id="CP000487">
    <property type="protein sequence ID" value="ABK82525.1"/>
    <property type="molecule type" value="Genomic_DNA"/>
</dbReference>
<dbReference type="RefSeq" id="WP_002850137.1">
    <property type="nucleotide sequence ID" value="NC_008599.1"/>
</dbReference>
<dbReference type="SMR" id="A0RQJ6"/>
<dbReference type="GeneID" id="61065151"/>
<dbReference type="KEGG" id="cff:CFF8240_1333"/>
<dbReference type="eggNOG" id="COG0781">
    <property type="taxonomic scope" value="Bacteria"/>
</dbReference>
<dbReference type="HOGENOM" id="CLU_087843_3_3_7"/>
<dbReference type="Proteomes" id="UP000000760">
    <property type="component" value="Chromosome"/>
</dbReference>
<dbReference type="GO" id="GO:0005829">
    <property type="term" value="C:cytosol"/>
    <property type="evidence" value="ECO:0007669"/>
    <property type="project" value="TreeGrafter"/>
</dbReference>
<dbReference type="GO" id="GO:0003723">
    <property type="term" value="F:RNA binding"/>
    <property type="evidence" value="ECO:0007669"/>
    <property type="project" value="UniProtKB-UniRule"/>
</dbReference>
<dbReference type="GO" id="GO:0006353">
    <property type="term" value="P:DNA-templated transcription termination"/>
    <property type="evidence" value="ECO:0007669"/>
    <property type="project" value="UniProtKB-UniRule"/>
</dbReference>
<dbReference type="GO" id="GO:0031564">
    <property type="term" value="P:transcription antitermination"/>
    <property type="evidence" value="ECO:0007669"/>
    <property type="project" value="UniProtKB-KW"/>
</dbReference>
<dbReference type="CDD" id="cd00619">
    <property type="entry name" value="Terminator_NusB"/>
    <property type="match status" value="1"/>
</dbReference>
<dbReference type="Gene3D" id="1.10.940.10">
    <property type="entry name" value="NusB-like"/>
    <property type="match status" value="1"/>
</dbReference>
<dbReference type="HAMAP" id="MF_00073">
    <property type="entry name" value="NusB"/>
    <property type="match status" value="1"/>
</dbReference>
<dbReference type="InterPro" id="IPR035926">
    <property type="entry name" value="NusB-like_sf"/>
</dbReference>
<dbReference type="InterPro" id="IPR011605">
    <property type="entry name" value="NusB_fam"/>
</dbReference>
<dbReference type="InterPro" id="IPR006027">
    <property type="entry name" value="NusB_RsmB_TIM44"/>
</dbReference>
<dbReference type="NCBIfam" id="TIGR01951">
    <property type="entry name" value="nusB"/>
    <property type="match status" value="1"/>
</dbReference>
<dbReference type="PANTHER" id="PTHR11078:SF3">
    <property type="entry name" value="ANTITERMINATION NUSB DOMAIN-CONTAINING PROTEIN"/>
    <property type="match status" value="1"/>
</dbReference>
<dbReference type="PANTHER" id="PTHR11078">
    <property type="entry name" value="N UTILIZATION SUBSTANCE PROTEIN B-RELATED"/>
    <property type="match status" value="1"/>
</dbReference>
<dbReference type="Pfam" id="PF01029">
    <property type="entry name" value="NusB"/>
    <property type="match status" value="1"/>
</dbReference>
<dbReference type="SUPFAM" id="SSF48013">
    <property type="entry name" value="NusB-like"/>
    <property type="match status" value="1"/>
</dbReference>
<reference key="1">
    <citation type="submission" date="2006-11" db="EMBL/GenBank/DDBJ databases">
        <title>Sequence of Campylobacter fetus subsp. fetus 82-40.</title>
        <authorList>
            <person name="Fouts D.E."/>
            <person name="Nelson K.E."/>
        </authorList>
    </citation>
    <scope>NUCLEOTIDE SEQUENCE [LARGE SCALE GENOMIC DNA]</scope>
    <source>
        <strain>82-40</strain>
    </source>
</reference>